<protein>
    <recommendedName>
        <fullName>Tribbles homolog 2</fullName>
        <shortName>TRB-2</shortName>
    </recommendedName>
</protein>
<evidence type="ECO:0000250" key="1"/>
<evidence type="ECO:0000250" key="2">
    <source>
        <dbReference type="UniProtKB" id="Q28283"/>
    </source>
</evidence>
<evidence type="ECO:0000250" key="3">
    <source>
        <dbReference type="UniProtKB" id="Q96RU8"/>
    </source>
</evidence>
<evidence type="ECO:0000255" key="4">
    <source>
        <dbReference type="PROSITE-ProRule" id="PRU00159"/>
    </source>
</evidence>
<evidence type="ECO:0000256" key="5">
    <source>
        <dbReference type="SAM" id="MobiDB-lite"/>
    </source>
</evidence>
<evidence type="ECO:0000305" key="6"/>
<evidence type="ECO:0000312" key="7">
    <source>
        <dbReference type="EMBL" id="AAH27159.1"/>
    </source>
</evidence>
<evidence type="ECO:0000312" key="8">
    <source>
        <dbReference type="EMBL" id="AAH34338.1"/>
    </source>
</evidence>
<evidence type="ECO:0000312" key="9">
    <source>
        <dbReference type="EMBL" id="AAH37387.1"/>
    </source>
</evidence>
<evidence type="ECO:0000312" key="10">
    <source>
        <dbReference type="EMBL" id="AAM45477.1"/>
    </source>
</evidence>
<evidence type="ECO:0000312" key="11">
    <source>
        <dbReference type="EMBL" id="BAC32063.1"/>
    </source>
</evidence>
<evidence type="ECO:0000312" key="12">
    <source>
        <dbReference type="EMBL" id="BAC37820.1"/>
    </source>
</evidence>
<evidence type="ECO:0000312" key="13">
    <source>
        <dbReference type="EMBL" id="BAC38467.1"/>
    </source>
</evidence>
<evidence type="ECO:0000312" key="14">
    <source>
        <dbReference type="EMBL" id="BAE25758.1"/>
    </source>
</evidence>
<evidence type="ECO:0000312" key="15">
    <source>
        <dbReference type="MGI" id="MGI:2145021"/>
    </source>
</evidence>
<accession>Q8K4K3</accession>
<accession>Q8K017</accession>
<accession>Q8R2V8</accession>
<feature type="chain" id="PRO_0000131864" description="Tribbles homolog 2">
    <location>
        <begin position="1"/>
        <end position="343"/>
    </location>
</feature>
<feature type="domain" description="Protein kinase" evidence="4">
    <location>
        <begin position="61"/>
        <end position="308"/>
    </location>
</feature>
<feature type="region of interest" description="Disordered" evidence="5">
    <location>
        <begin position="25"/>
        <end position="50"/>
    </location>
</feature>
<feature type="compositionally biased region" description="Polar residues" evidence="5">
    <location>
        <begin position="29"/>
        <end position="45"/>
    </location>
</feature>
<feature type="sequence conflict" description="In Ref. 1; AAM45477." evidence="6" ref="1">
    <original>L</original>
    <variation>V</variation>
    <location>
        <position position="244"/>
    </location>
</feature>
<sequence length="343" mass="38773">MNIHRSTPITIARYGRSRNKTQDFEELSSIRSAEPSQSFSPNLGSPSPPETPNLSHCVSCIGKYLLLEPLEGDHVFRAVHLHSGEELVCKVFEISCYQESLAPCFCLSAHSNINQITEILLGETKAYVFFERSYGDMHSFVRTCKKLREEEAARLFYQIASAVAHCHDGGLVLRDLKLRKFIFKDEERTRVKLESLEDAYILRGDDDSLSDKHGCPAYVSPEILNTSGSYSGKAADVWSLGVMLYTMLVGRYPFHDIEPSSLFSKIRRGQFNIPETLSPKAKCLIRSILRREPSERLTSQEILDHPWFSTDFSVSNSGFGAKEACDQLVPDVNMEENLDPFFN</sequence>
<keyword id="KW-0963">Cytoplasm</keyword>
<keyword id="KW-0206">Cytoskeleton</keyword>
<keyword id="KW-0649">Protein kinase inhibitor</keyword>
<keyword id="KW-1185">Reference proteome</keyword>
<gene>
    <name evidence="15" type="primary">Trib2</name>
</gene>
<proteinExistence type="evidence at transcript level"/>
<reference evidence="10" key="1">
    <citation type="submission" date="2001-03" db="EMBL/GenBank/DDBJ databases">
        <title>Mammalian homologs of Drosophila tribbles (htrb) control mitogen activated protein kinase signaling.</title>
        <authorList>
            <person name="Kiss-Toth E."/>
            <person name="Dempsey C."/>
            <person name="Jozsa V."/>
            <person name="Caunt J."/>
            <person name="Oxley K.M."/>
            <person name="Bagstaff S.M."/>
            <person name="Wyllie D.H."/>
            <person name="Harte M."/>
            <person name="O'Neill L.A.J."/>
            <person name="Qwarnstrom E.E."/>
            <person name="Dower S.K."/>
        </authorList>
    </citation>
    <scope>NUCLEOTIDE SEQUENCE [MRNA]</scope>
</reference>
<reference evidence="11" key="2">
    <citation type="journal article" date="2005" name="Science">
        <title>The transcriptional landscape of the mammalian genome.</title>
        <authorList>
            <person name="Carninci P."/>
            <person name="Kasukawa T."/>
            <person name="Katayama S."/>
            <person name="Gough J."/>
            <person name="Frith M.C."/>
            <person name="Maeda N."/>
            <person name="Oyama R."/>
            <person name="Ravasi T."/>
            <person name="Lenhard B."/>
            <person name="Wells C."/>
            <person name="Kodzius R."/>
            <person name="Shimokawa K."/>
            <person name="Bajic V.B."/>
            <person name="Brenner S.E."/>
            <person name="Batalov S."/>
            <person name="Forrest A.R."/>
            <person name="Zavolan M."/>
            <person name="Davis M.J."/>
            <person name="Wilming L.G."/>
            <person name="Aidinis V."/>
            <person name="Allen J.E."/>
            <person name="Ambesi-Impiombato A."/>
            <person name="Apweiler R."/>
            <person name="Aturaliya R.N."/>
            <person name="Bailey T.L."/>
            <person name="Bansal M."/>
            <person name="Baxter L."/>
            <person name="Beisel K.W."/>
            <person name="Bersano T."/>
            <person name="Bono H."/>
            <person name="Chalk A.M."/>
            <person name="Chiu K.P."/>
            <person name="Choudhary V."/>
            <person name="Christoffels A."/>
            <person name="Clutterbuck D.R."/>
            <person name="Crowe M.L."/>
            <person name="Dalla E."/>
            <person name="Dalrymple B.P."/>
            <person name="de Bono B."/>
            <person name="Della Gatta G."/>
            <person name="di Bernardo D."/>
            <person name="Down T."/>
            <person name="Engstrom P."/>
            <person name="Fagiolini M."/>
            <person name="Faulkner G."/>
            <person name="Fletcher C.F."/>
            <person name="Fukushima T."/>
            <person name="Furuno M."/>
            <person name="Futaki S."/>
            <person name="Gariboldi M."/>
            <person name="Georgii-Hemming P."/>
            <person name="Gingeras T.R."/>
            <person name="Gojobori T."/>
            <person name="Green R.E."/>
            <person name="Gustincich S."/>
            <person name="Harbers M."/>
            <person name="Hayashi Y."/>
            <person name="Hensch T.K."/>
            <person name="Hirokawa N."/>
            <person name="Hill D."/>
            <person name="Huminiecki L."/>
            <person name="Iacono M."/>
            <person name="Ikeo K."/>
            <person name="Iwama A."/>
            <person name="Ishikawa T."/>
            <person name="Jakt M."/>
            <person name="Kanapin A."/>
            <person name="Katoh M."/>
            <person name="Kawasawa Y."/>
            <person name="Kelso J."/>
            <person name="Kitamura H."/>
            <person name="Kitano H."/>
            <person name="Kollias G."/>
            <person name="Krishnan S.P."/>
            <person name="Kruger A."/>
            <person name="Kummerfeld S.K."/>
            <person name="Kurochkin I.V."/>
            <person name="Lareau L.F."/>
            <person name="Lazarevic D."/>
            <person name="Lipovich L."/>
            <person name="Liu J."/>
            <person name="Liuni S."/>
            <person name="McWilliam S."/>
            <person name="Madan Babu M."/>
            <person name="Madera M."/>
            <person name="Marchionni L."/>
            <person name="Matsuda H."/>
            <person name="Matsuzawa S."/>
            <person name="Miki H."/>
            <person name="Mignone F."/>
            <person name="Miyake S."/>
            <person name="Morris K."/>
            <person name="Mottagui-Tabar S."/>
            <person name="Mulder N."/>
            <person name="Nakano N."/>
            <person name="Nakauchi H."/>
            <person name="Ng P."/>
            <person name="Nilsson R."/>
            <person name="Nishiguchi S."/>
            <person name="Nishikawa S."/>
            <person name="Nori F."/>
            <person name="Ohara O."/>
            <person name="Okazaki Y."/>
            <person name="Orlando V."/>
            <person name="Pang K.C."/>
            <person name="Pavan W.J."/>
            <person name="Pavesi G."/>
            <person name="Pesole G."/>
            <person name="Petrovsky N."/>
            <person name="Piazza S."/>
            <person name="Reed J."/>
            <person name="Reid J.F."/>
            <person name="Ring B.Z."/>
            <person name="Ringwald M."/>
            <person name="Rost B."/>
            <person name="Ruan Y."/>
            <person name="Salzberg S.L."/>
            <person name="Sandelin A."/>
            <person name="Schneider C."/>
            <person name="Schoenbach C."/>
            <person name="Sekiguchi K."/>
            <person name="Semple C.A."/>
            <person name="Seno S."/>
            <person name="Sessa L."/>
            <person name="Sheng Y."/>
            <person name="Shibata Y."/>
            <person name="Shimada H."/>
            <person name="Shimada K."/>
            <person name="Silva D."/>
            <person name="Sinclair B."/>
            <person name="Sperling S."/>
            <person name="Stupka E."/>
            <person name="Sugiura K."/>
            <person name="Sultana R."/>
            <person name="Takenaka Y."/>
            <person name="Taki K."/>
            <person name="Tammoja K."/>
            <person name="Tan S.L."/>
            <person name="Tang S."/>
            <person name="Taylor M.S."/>
            <person name="Tegner J."/>
            <person name="Teichmann S.A."/>
            <person name="Ueda H.R."/>
            <person name="van Nimwegen E."/>
            <person name="Verardo R."/>
            <person name="Wei C.L."/>
            <person name="Yagi K."/>
            <person name="Yamanishi H."/>
            <person name="Zabarovsky E."/>
            <person name="Zhu S."/>
            <person name="Zimmer A."/>
            <person name="Hide W."/>
            <person name="Bult C."/>
            <person name="Grimmond S.M."/>
            <person name="Teasdale R.D."/>
            <person name="Liu E.T."/>
            <person name="Brusic V."/>
            <person name="Quackenbush J."/>
            <person name="Wahlestedt C."/>
            <person name="Mattick J.S."/>
            <person name="Hume D.A."/>
            <person name="Kai C."/>
            <person name="Sasaki D."/>
            <person name="Tomaru Y."/>
            <person name="Fukuda S."/>
            <person name="Kanamori-Katayama M."/>
            <person name="Suzuki M."/>
            <person name="Aoki J."/>
            <person name="Arakawa T."/>
            <person name="Iida J."/>
            <person name="Imamura K."/>
            <person name="Itoh M."/>
            <person name="Kato T."/>
            <person name="Kawaji H."/>
            <person name="Kawagashira N."/>
            <person name="Kawashima T."/>
            <person name="Kojima M."/>
            <person name="Kondo S."/>
            <person name="Konno H."/>
            <person name="Nakano K."/>
            <person name="Ninomiya N."/>
            <person name="Nishio T."/>
            <person name="Okada M."/>
            <person name="Plessy C."/>
            <person name="Shibata K."/>
            <person name="Shiraki T."/>
            <person name="Suzuki S."/>
            <person name="Tagami M."/>
            <person name="Waki K."/>
            <person name="Watahiki A."/>
            <person name="Okamura-Oho Y."/>
            <person name="Suzuki H."/>
            <person name="Kawai J."/>
            <person name="Hayashizaki Y."/>
        </authorList>
    </citation>
    <scope>NUCLEOTIDE SEQUENCE [LARGE SCALE MRNA]</scope>
    <source>
        <strain evidence="11">C57BL/6J</strain>
        <tissue evidence="12">Aorta</tissue>
        <tissue evidence="13">Cerebellum</tissue>
        <tissue evidence="14">Colon</tissue>
        <tissue evidence="11">Retina</tissue>
        <tissue evidence="12">Vein</tissue>
    </source>
</reference>
<reference evidence="6 7" key="3">
    <citation type="journal article" date="2004" name="Genome Res.">
        <title>The status, quality, and expansion of the NIH full-length cDNA project: the Mammalian Gene Collection (MGC).</title>
        <authorList>
            <consortium name="The MGC Project Team"/>
        </authorList>
    </citation>
    <scope>NUCLEOTIDE SEQUENCE [LARGE SCALE MRNA]</scope>
    <source>
        <strain evidence="7">FVB/N</strain>
        <tissue evidence="9">Eye</tissue>
        <tissue evidence="8">Kidney</tissue>
        <tissue evidence="7">Mammary gland</tissue>
    </source>
</reference>
<dbReference type="EMBL" id="AF358867">
    <property type="protein sequence ID" value="AAM45477.1"/>
    <property type="molecule type" value="mRNA"/>
</dbReference>
<dbReference type="EMBL" id="AK044747">
    <property type="protein sequence ID" value="BAC32063.1"/>
    <property type="molecule type" value="mRNA"/>
</dbReference>
<dbReference type="EMBL" id="AK080064">
    <property type="protein sequence ID" value="BAC37820.1"/>
    <property type="molecule type" value="mRNA"/>
</dbReference>
<dbReference type="EMBL" id="AK082329">
    <property type="protein sequence ID" value="BAC38467.1"/>
    <property type="molecule type" value="mRNA"/>
</dbReference>
<dbReference type="EMBL" id="AK144192">
    <property type="protein sequence ID" value="BAE25758.1"/>
    <property type="molecule type" value="mRNA"/>
</dbReference>
<dbReference type="EMBL" id="BC027159">
    <property type="protein sequence ID" value="AAH27159.1"/>
    <property type="molecule type" value="mRNA"/>
</dbReference>
<dbReference type="EMBL" id="BC034338">
    <property type="protein sequence ID" value="AAH34338.1"/>
    <property type="molecule type" value="mRNA"/>
</dbReference>
<dbReference type="EMBL" id="BC037387">
    <property type="protein sequence ID" value="AAH37387.1"/>
    <property type="molecule type" value="mRNA"/>
</dbReference>
<dbReference type="CCDS" id="CCDS25821.1"/>
<dbReference type="RefSeq" id="NP_001409773.1">
    <property type="nucleotide sequence ID" value="NM_001422844.1"/>
</dbReference>
<dbReference type="RefSeq" id="NP_653134.2">
    <property type="nucleotide sequence ID" value="NM_144551.5"/>
</dbReference>
<dbReference type="RefSeq" id="XP_006515117.1">
    <property type="nucleotide sequence ID" value="XM_006515054.1"/>
</dbReference>
<dbReference type="SMR" id="Q8K4K3"/>
<dbReference type="BioGRID" id="229913">
    <property type="interactions" value="2"/>
</dbReference>
<dbReference type="FunCoup" id="Q8K4K3">
    <property type="interactions" value="2091"/>
</dbReference>
<dbReference type="IntAct" id="Q8K4K3">
    <property type="interactions" value="1"/>
</dbReference>
<dbReference type="STRING" id="10090.ENSMUSP00000020922"/>
<dbReference type="iPTMnet" id="Q8K4K3"/>
<dbReference type="PhosphoSitePlus" id="Q8K4K3"/>
<dbReference type="PaxDb" id="10090-ENSMUSP00000020922"/>
<dbReference type="ProteomicsDB" id="258845"/>
<dbReference type="Antibodypedia" id="674">
    <property type="antibodies" value="276 antibodies from 33 providers"/>
</dbReference>
<dbReference type="DNASU" id="217410"/>
<dbReference type="Ensembl" id="ENSMUST00000020922.8">
    <property type="protein sequence ID" value="ENSMUSP00000020922.8"/>
    <property type="gene ID" value="ENSMUSG00000020601.9"/>
</dbReference>
<dbReference type="GeneID" id="217410"/>
<dbReference type="KEGG" id="mmu:217410"/>
<dbReference type="UCSC" id="uc007nbq.1">
    <property type="organism name" value="mouse"/>
</dbReference>
<dbReference type="AGR" id="MGI:2145021"/>
<dbReference type="CTD" id="28951"/>
<dbReference type="MGI" id="MGI:2145021">
    <property type="gene designation" value="Trib2"/>
</dbReference>
<dbReference type="VEuPathDB" id="HostDB:ENSMUSG00000020601"/>
<dbReference type="eggNOG" id="KOG0583">
    <property type="taxonomic scope" value="Eukaryota"/>
</dbReference>
<dbReference type="GeneTree" id="ENSGT00950000182986"/>
<dbReference type="HOGENOM" id="CLU_000288_13_1_1"/>
<dbReference type="InParanoid" id="Q8K4K3"/>
<dbReference type="OMA" id="CFCLPPH"/>
<dbReference type="OrthoDB" id="410920at2759"/>
<dbReference type="PhylomeDB" id="Q8K4K3"/>
<dbReference type="TreeFam" id="TF329785"/>
<dbReference type="BioGRID-ORCS" id="217410">
    <property type="hits" value="1 hit in 80 CRISPR screens"/>
</dbReference>
<dbReference type="ChiTaRS" id="Trib2">
    <property type="organism name" value="mouse"/>
</dbReference>
<dbReference type="PRO" id="PR:Q8K4K3"/>
<dbReference type="Proteomes" id="UP000000589">
    <property type="component" value="Chromosome 12"/>
</dbReference>
<dbReference type="RNAct" id="Q8K4K3">
    <property type="molecule type" value="protein"/>
</dbReference>
<dbReference type="Bgee" id="ENSMUSG00000020601">
    <property type="expression patterns" value="Expressed in humerus cartilage element and 257 other cell types or tissues"/>
</dbReference>
<dbReference type="ExpressionAtlas" id="Q8K4K3">
    <property type="expression patterns" value="baseline and differential"/>
</dbReference>
<dbReference type="GO" id="GO:0005737">
    <property type="term" value="C:cytoplasm"/>
    <property type="evidence" value="ECO:0000250"/>
    <property type="project" value="UniProtKB"/>
</dbReference>
<dbReference type="GO" id="GO:0005856">
    <property type="term" value="C:cytoskeleton"/>
    <property type="evidence" value="ECO:0007669"/>
    <property type="project" value="UniProtKB-SubCell"/>
</dbReference>
<dbReference type="GO" id="GO:0004860">
    <property type="term" value="F:protein kinase inhibitor activity"/>
    <property type="evidence" value="ECO:0007669"/>
    <property type="project" value="UniProtKB-KW"/>
</dbReference>
<dbReference type="GO" id="GO:0061629">
    <property type="term" value="F:RNA polymerase II-specific DNA-binding transcription factor binding"/>
    <property type="evidence" value="ECO:0000314"/>
    <property type="project" value="BHF-UCL"/>
</dbReference>
<dbReference type="GO" id="GO:0031625">
    <property type="term" value="F:ubiquitin protein ligase binding"/>
    <property type="evidence" value="ECO:0000314"/>
    <property type="project" value="BHF-UCL"/>
</dbReference>
<dbReference type="GO" id="GO:0055106">
    <property type="term" value="F:ubiquitin-protein transferase regulator activity"/>
    <property type="evidence" value="ECO:0000314"/>
    <property type="project" value="BHF-UCL"/>
</dbReference>
<dbReference type="GO" id="GO:0045599">
    <property type="term" value="P:negative regulation of fat cell differentiation"/>
    <property type="evidence" value="ECO:0000315"/>
    <property type="project" value="BHF-UCL"/>
</dbReference>
<dbReference type="GO" id="GO:0032693">
    <property type="term" value="P:negative regulation of interleukin-10 production"/>
    <property type="evidence" value="ECO:0007669"/>
    <property type="project" value="Ensembl"/>
</dbReference>
<dbReference type="GO" id="GO:0032436">
    <property type="term" value="P:positive regulation of proteasomal ubiquitin-dependent protein catabolic process"/>
    <property type="evidence" value="ECO:0000314"/>
    <property type="project" value="BHF-UCL"/>
</dbReference>
<dbReference type="GO" id="GO:0043405">
    <property type="term" value="P:regulation of MAP kinase activity"/>
    <property type="evidence" value="ECO:0000250"/>
    <property type="project" value="UniProtKB"/>
</dbReference>
<dbReference type="CDD" id="cd14022">
    <property type="entry name" value="PK_TRB2"/>
    <property type="match status" value="1"/>
</dbReference>
<dbReference type="FunFam" id="1.10.510.10:FF:000153">
    <property type="entry name" value="Tribbles homolog 2"/>
    <property type="match status" value="1"/>
</dbReference>
<dbReference type="FunFam" id="3.30.200.20:FF:000253">
    <property type="entry name" value="tribbles homolog 2"/>
    <property type="match status" value="1"/>
</dbReference>
<dbReference type="Gene3D" id="3.30.200.20">
    <property type="entry name" value="Phosphorylase Kinase, domain 1"/>
    <property type="match status" value="1"/>
</dbReference>
<dbReference type="Gene3D" id="1.10.510.10">
    <property type="entry name" value="Transferase(Phosphotransferase) domain 1"/>
    <property type="match status" value="1"/>
</dbReference>
<dbReference type="InterPro" id="IPR011009">
    <property type="entry name" value="Kinase-like_dom_sf"/>
</dbReference>
<dbReference type="InterPro" id="IPR000719">
    <property type="entry name" value="Prot_kinase_dom"/>
</dbReference>
<dbReference type="InterPro" id="IPR024104">
    <property type="entry name" value="Tribbles/Ser_Thr_kinase_40"/>
</dbReference>
<dbReference type="PANTHER" id="PTHR22961">
    <property type="entry name" value="SER/THR PROTEIN KINASE-TRB"/>
    <property type="match status" value="1"/>
</dbReference>
<dbReference type="PANTHER" id="PTHR22961:SF15">
    <property type="entry name" value="TRIBBLES HOMOLOG 2"/>
    <property type="match status" value="1"/>
</dbReference>
<dbReference type="Pfam" id="PF00069">
    <property type="entry name" value="Pkinase"/>
    <property type="match status" value="1"/>
</dbReference>
<dbReference type="SUPFAM" id="SSF56112">
    <property type="entry name" value="Protein kinase-like (PK-like)"/>
    <property type="match status" value="1"/>
</dbReference>
<dbReference type="PROSITE" id="PS50011">
    <property type="entry name" value="PROTEIN_KINASE_DOM"/>
    <property type="match status" value="1"/>
</dbReference>
<organism>
    <name type="scientific">Mus musculus</name>
    <name type="common">Mouse</name>
    <dbReference type="NCBI Taxonomy" id="10090"/>
    <lineage>
        <taxon>Eukaryota</taxon>
        <taxon>Metazoa</taxon>
        <taxon>Chordata</taxon>
        <taxon>Craniata</taxon>
        <taxon>Vertebrata</taxon>
        <taxon>Euteleostomi</taxon>
        <taxon>Mammalia</taxon>
        <taxon>Eutheria</taxon>
        <taxon>Euarchontoglires</taxon>
        <taxon>Glires</taxon>
        <taxon>Rodentia</taxon>
        <taxon>Myomorpha</taxon>
        <taxon>Muroidea</taxon>
        <taxon>Muridae</taxon>
        <taxon>Murinae</taxon>
        <taxon>Mus</taxon>
        <taxon>Mus</taxon>
    </lineage>
</organism>
<name>TRIB2_MOUSE</name>
<comment type="function">
    <text evidence="2 3">Interacts with MAPK kinases and regulates activation of MAP kinases. Does not display kinase activity (By similarity).</text>
</comment>
<comment type="subcellular location">
    <subcellularLocation>
        <location evidence="1">Cytoplasm</location>
    </subcellularLocation>
    <subcellularLocation>
        <location evidence="1">Cytoplasm</location>
        <location evidence="1">Cytoskeleton</location>
    </subcellularLocation>
    <text evidence="1">May associate with the cytoskeleton.</text>
</comment>
<comment type="domain">
    <text>The protein kinase domain is predicted to be catalytically inactive.</text>
</comment>
<comment type="similarity">
    <text evidence="6">Belongs to the protein kinase superfamily. CAMK Ser/Thr protein kinase family. Tribbles subfamily.</text>
</comment>